<feature type="chain" id="PRO_1000050928" description="UDP-3-O-acylglucosamine N-acyltransferase">
    <location>
        <begin position="1"/>
        <end position="351"/>
    </location>
</feature>
<feature type="active site" description="Proton acceptor" evidence="1">
    <location>
        <position position="257"/>
    </location>
</feature>
<comment type="function">
    <text evidence="1">Catalyzes the N-acylation of UDP-3-O-acylglucosamine using 3-hydroxyacyl-ACP as the acyl donor. Is involved in the biosynthesis of lipid A, a phosphorylated glycolipid that anchors the lipopolysaccharide to the outer membrane of the cell.</text>
</comment>
<comment type="catalytic activity">
    <reaction evidence="1">
        <text>a UDP-3-O-[(3R)-3-hydroxyacyl]-alpha-D-glucosamine + a (3R)-hydroxyacyl-[ACP] = a UDP-2-N,3-O-bis[(3R)-3-hydroxyacyl]-alpha-D-glucosamine + holo-[ACP] + H(+)</text>
        <dbReference type="Rhea" id="RHEA:53836"/>
        <dbReference type="Rhea" id="RHEA-COMP:9685"/>
        <dbReference type="Rhea" id="RHEA-COMP:9945"/>
        <dbReference type="ChEBI" id="CHEBI:15378"/>
        <dbReference type="ChEBI" id="CHEBI:64479"/>
        <dbReference type="ChEBI" id="CHEBI:78827"/>
        <dbReference type="ChEBI" id="CHEBI:137740"/>
        <dbReference type="ChEBI" id="CHEBI:137748"/>
        <dbReference type="EC" id="2.3.1.191"/>
    </reaction>
</comment>
<comment type="pathway">
    <text evidence="1">Bacterial outer membrane biogenesis; LPS lipid A biosynthesis.</text>
</comment>
<comment type="subunit">
    <text evidence="1">Homotrimer.</text>
</comment>
<comment type="similarity">
    <text evidence="1">Belongs to the transferase hexapeptide repeat family. LpxD subfamily.</text>
</comment>
<gene>
    <name evidence="1" type="primary">lpxD</name>
    <name type="ordered locus">BOV_1111</name>
</gene>
<evidence type="ECO:0000255" key="1">
    <source>
        <dbReference type="HAMAP-Rule" id="MF_00523"/>
    </source>
</evidence>
<reference key="1">
    <citation type="journal article" date="2009" name="PLoS ONE">
        <title>Genome degradation in Brucella ovis corresponds with narrowing of its host range and tissue tropism.</title>
        <authorList>
            <person name="Tsolis R.M."/>
            <person name="Seshadri R."/>
            <person name="Santos R.L."/>
            <person name="Sangari F.J."/>
            <person name="Lobo J.M."/>
            <person name="de Jong M.F."/>
            <person name="Ren Q."/>
            <person name="Myers G."/>
            <person name="Brinkac L.M."/>
            <person name="Nelson W.C."/>
            <person name="Deboy R.T."/>
            <person name="Angiuoli S."/>
            <person name="Khouri H."/>
            <person name="Dimitrov G."/>
            <person name="Robinson J.R."/>
            <person name="Mulligan S."/>
            <person name="Walker R.L."/>
            <person name="Elzer P.E."/>
            <person name="Hassan K.A."/>
            <person name="Paulsen I.T."/>
        </authorList>
    </citation>
    <scope>NUCLEOTIDE SEQUENCE [LARGE SCALE GENOMIC DNA]</scope>
    <source>
        <strain>ATCC 25840 / 63/290 / NCTC 10512</strain>
    </source>
</reference>
<dbReference type="EC" id="2.3.1.191" evidence="1"/>
<dbReference type="EMBL" id="CP000708">
    <property type="protein sequence ID" value="ABQ61638.1"/>
    <property type="molecule type" value="Genomic_DNA"/>
</dbReference>
<dbReference type="RefSeq" id="WP_002964281.1">
    <property type="nucleotide sequence ID" value="NC_009505.1"/>
</dbReference>
<dbReference type="SMR" id="A5VQS5"/>
<dbReference type="GeneID" id="97533596"/>
<dbReference type="KEGG" id="bov:BOV_1111"/>
<dbReference type="HOGENOM" id="CLU_049865_0_2_5"/>
<dbReference type="PhylomeDB" id="A5VQS5"/>
<dbReference type="UniPathway" id="UPA00973"/>
<dbReference type="Proteomes" id="UP000006383">
    <property type="component" value="Chromosome I"/>
</dbReference>
<dbReference type="GO" id="GO:0016020">
    <property type="term" value="C:membrane"/>
    <property type="evidence" value="ECO:0007669"/>
    <property type="project" value="GOC"/>
</dbReference>
<dbReference type="GO" id="GO:0016410">
    <property type="term" value="F:N-acyltransferase activity"/>
    <property type="evidence" value="ECO:0007669"/>
    <property type="project" value="InterPro"/>
</dbReference>
<dbReference type="GO" id="GO:0009245">
    <property type="term" value="P:lipid A biosynthetic process"/>
    <property type="evidence" value="ECO:0007669"/>
    <property type="project" value="UniProtKB-UniRule"/>
</dbReference>
<dbReference type="CDD" id="cd03352">
    <property type="entry name" value="LbH_LpxD"/>
    <property type="match status" value="1"/>
</dbReference>
<dbReference type="Gene3D" id="2.160.10.10">
    <property type="entry name" value="Hexapeptide repeat proteins"/>
    <property type="match status" value="1"/>
</dbReference>
<dbReference type="Gene3D" id="3.40.1390.10">
    <property type="entry name" value="MurE/MurF, N-terminal domain"/>
    <property type="match status" value="1"/>
</dbReference>
<dbReference type="HAMAP" id="MF_00523">
    <property type="entry name" value="LpxD"/>
    <property type="match status" value="1"/>
</dbReference>
<dbReference type="InterPro" id="IPR001451">
    <property type="entry name" value="Hexapep"/>
</dbReference>
<dbReference type="InterPro" id="IPR018357">
    <property type="entry name" value="Hexapep_transf_CS"/>
</dbReference>
<dbReference type="InterPro" id="IPR007691">
    <property type="entry name" value="LpxD"/>
</dbReference>
<dbReference type="InterPro" id="IPR011004">
    <property type="entry name" value="Trimer_LpxA-like_sf"/>
</dbReference>
<dbReference type="InterPro" id="IPR020573">
    <property type="entry name" value="UDP_GlcNAc_AcTrfase_non-rep"/>
</dbReference>
<dbReference type="NCBIfam" id="TIGR01853">
    <property type="entry name" value="lipid_A_lpxD"/>
    <property type="match status" value="1"/>
</dbReference>
<dbReference type="NCBIfam" id="NF002060">
    <property type="entry name" value="PRK00892.1"/>
    <property type="match status" value="1"/>
</dbReference>
<dbReference type="PANTHER" id="PTHR43378">
    <property type="entry name" value="UDP-3-O-ACYLGLUCOSAMINE N-ACYLTRANSFERASE"/>
    <property type="match status" value="1"/>
</dbReference>
<dbReference type="PANTHER" id="PTHR43378:SF2">
    <property type="entry name" value="UDP-3-O-ACYLGLUCOSAMINE N-ACYLTRANSFERASE 1, MITOCHONDRIAL-RELATED"/>
    <property type="match status" value="1"/>
</dbReference>
<dbReference type="Pfam" id="PF00132">
    <property type="entry name" value="Hexapep"/>
    <property type="match status" value="2"/>
</dbReference>
<dbReference type="Pfam" id="PF04613">
    <property type="entry name" value="LpxD"/>
    <property type="match status" value="1"/>
</dbReference>
<dbReference type="SUPFAM" id="SSF51161">
    <property type="entry name" value="Trimeric LpxA-like enzymes"/>
    <property type="match status" value="1"/>
</dbReference>
<dbReference type="PROSITE" id="PS00101">
    <property type="entry name" value="HEXAPEP_TRANSFERASES"/>
    <property type="match status" value="1"/>
</dbReference>
<organism>
    <name type="scientific">Brucella ovis (strain ATCC 25840 / 63/290 / NCTC 10512)</name>
    <dbReference type="NCBI Taxonomy" id="444178"/>
    <lineage>
        <taxon>Bacteria</taxon>
        <taxon>Pseudomonadati</taxon>
        <taxon>Pseudomonadota</taxon>
        <taxon>Alphaproteobacteria</taxon>
        <taxon>Hyphomicrobiales</taxon>
        <taxon>Brucellaceae</taxon>
        <taxon>Brucella/Ochrobactrum group</taxon>
        <taxon>Brucella</taxon>
    </lineage>
</organism>
<keyword id="KW-0012">Acyltransferase</keyword>
<keyword id="KW-0441">Lipid A biosynthesis</keyword>
<keyword id="KW-0444">Lipid biosynthesis</keyword>
<keyword id="KW-0443">Lipid metabolism</keyword>
<keyword id="KW-0677">Repeat</keyword>
<keyword id="KW-0808">Transferase</keyword>
<name>LPXD_BRUO2</name>
<accession>A5VQS5</accession>
<sequence length="351" mass="36357">MADPIFFKPSRELTIGDVADFTGASLRDPKLAPRSVERLASLKDAGEGALVFVEGKKNVSSLVGLKAAGVLCTESLADSVPSGIAVLVSRHPHRDFSAVGRMLFPASVRPESWLGETGISPAAFIHPTAQIEDGATVEAGAVIGSGVTIGAGTLIAATAVIGQNCQIGRNSYIAPGVSVQCAFIGNNVSLHPGVRIGQDGFGYVPGAAGLDKVPQLGRVIIQDNVEIGANTTVDRGSLDDTVIGEGTKIDNLVQIAHNVRIGRFCLVAAHCGISGSCVIGDQTMLGGRVGLADHLIIGSRVQVAAASGVMNDIPDGERWGGIPARPIKQWFRDIANIRSIGQSRKDASSDE</sequence>
<proteinExistence type="inferred from homology"/>
<protein>
    <recommendedName>
        <fullName evidence="1">UDP-3-O-acylglucosamine N-acyltransferase</fullName>
        <ecNumber evidence="1">2.3.1.191</ecNumber>
    </recommendedName>
</protein>